<evidence type="ECO:0000255" key="1"/>
<evidence type="ECO:0000269" key="2">
    <source>
    </source>
</evidence>
<evidence type="ECO:0000305" key="3"/>
<sequence>MNQYPAERIARARVLVVGDVMLDRYWFGEVDRISPEAPVPVVRVARREDRLGGAANVARNVAALGAQVTLIGVVGADEVGHRIERMAAEEGVRTDLVSDTEHPTTLKMRVLGRQQQLLRVDFEQHPEPAALDGISAAVARQLAQHDIVVLSDYAKGVLDRVESIIAAAVGHSLPVLVDPKGDHYERYRGATLVTPNRAEMREAVGRWKTEDELAERAQRLRLDLDLEALLVTRSEQGMTLFTDAGRDHADAAAHEVYDVSGAGDTVLATLAVMRAVGLSWGDAMRWANRAGGIVVGKLGTSVVTAAELAGEST</sequence>
<proteinExistence type="evidence at protein level"/>
<protein>
    <recommendedName>
        <fullName>D-beta-D-heptose 7-phosphate kinase</fullName>
        <ecNumber>2.7.1.167</ecNumber>
    </recommendedName>
    <alternativeName>
        <fullName>D-beta-D-heptose 7-phosphotransferase</fullName>
    </alternativeName>
    <alternativeName>
        <fullName>D-glycero-beta-D-manno-heptose-7-phosphate kinase</fullName>
    </alternativeName>
</protein>
<feature type="chain" id="PRO_0000424237" description="D-beta-D-heptose 7-phosphate kinase">
    <location>
        <begin position="1"/>
        <end position="313"/>
    </location>
</feature>
<feature type="active site" evidence="1">
    <location>
        <position position="264"/>
    </location>
</feature>
<feature type="binding site" evidence="1">
    <location>
        <begin position="196"/>
        <end position="199"/>
    </location>
    <ligand>
        <name>ATP</name>
        <dbReference type="ChEBI" id="CHEBI:30616"/>
    </ligand>
</feature>
<accession>Q7WGU8</accession>
<keyword id="KW-0067">ATP-binding</keyword>
<keyword id="KW-0119">Carbohydrate metabolism</keyword>
<keyword id="KW-0418">Kinase</keyword>
<keyword id="KW-0448">Lipopolysaccharide biosynthesis</keyword>
<keyword id="KW-0547">Nucleotide-binding</keyword>
<keyword id="KW-0808">Transferase</keyword>
<name>HEPPK_BORBR</name>
<gene>
    <name type="primary">rfaE</name>
    <name type="ordered locus">BB3463</name>
</gene>
<comment type="function">
    <text evidence="2">Catalyzes the phosphorylation of D-glycero-D-manno-heptose 7-phosphate at the C-1 position to selectively form D-glycero-beta-D-manno-heptose-1,7-bisphosphate.</text>
</comment>
<comment type="catalytic activity">
    <reaction evidence="2">
        <text>D-glycero-beta-D-manno-heptose 7-phosphate + ATP = D-glycero-beta-D-manno-heptose 1,7-bisphosphate + ADP + H(+)</text>
        <dbReference type="Rhea" id="RHEA:27473"/>
        <dbReference type="ChEBI" id="CHEBI:15378"/>
        <dbReference type="ChEBI" id="CHEBI:30616"/>
        <dbReference type="ChEBI" id="CHEBI:60204"/>
        <dbReference type="ChEBI" id="CHEBI:60208"/>
        <dbReference type="ChEBI" id="CHEBI:456216"/>
        <dbReference type="EC" id="2.7.1.167"/>
    </reaction>
</comment>
<comment type="pathway">
    <text evidence="2">Nucleotide-sugar biosynthesis; ADP-L-glycero-beta-D-manno-heptose biosynthesis; ADP-L-glycero-beta-D-manno-heptose from D-glycero-beta-D-manno-heptose 7-phosphate: step 1/4.</text>
</comment>
<comment type="pathway">
    <text evidence="2">Bacterial outer membrane biogenesis; LPS core biosynthesis.</text>
</comment>
<comment type="mass spectrometry"/>
<comment type="similarity">
    <text evidence="3">Belongs to the carbohydrate kinase PfkB family.</text>
</comment>
<dbReference type="EC" id="2.7.1.167"/>
<dbReference type="EMBL" id="BX640447">
    <property type="protein sequence ID" value="CAE33955.1"/>
    <property type="molecule type" value="Genomic_DNA"/>
</dbReference>
<dbReference type="SMR" id="Q7WGU8"/>
<dbReference type="KEGG" id="bbr:BB3463"/>
<dbReference type="eggNOG" id="COG2870">
    <property type="taxonomic scope" value="Bacteria"/>
</dbReference>
<dbReference type="HOGENOM" id="CLU_021150_0_1_4"/>
<dbReference type="BRENDA" id="2.7.1.167">
    <property type="organism ID" value="227"/>
</dbReference>
<dbReference type="UniPathway" id="UPA00356">
    <property type="reaction ID" value="UER00437"/>
</dbReference>
<dbReference type="UniPathway" id="UPA00958"/>
<dbReference type="Proteomes" id="UP000001027">
    <property type="component" value="Chromosome"/>
</dbReference>
<dbReference type="GO" id="GO:0005829">
    <property type="term" value="C:cytosol"/>
    <property type="evidence" value="ECO:0007669"/>
    <property type="project" value="TreeGrafter"/>
</dbReference>
<dbReference type="GO" id="GO:0005524">
    <property type="term" value="F:ATP binding"/>
    <property type="evidence" value="ECO:0007669"/>
    <property type="project" value="UniProtKB-KW"/>
</dbReference>
<dbReference type="GO" id="GO:0033785">
    <property type="term" value="F:heptose 7-phosphate kinase activity"/>
    <property type="evidence" value="ECO:0007669"/>
    <property type="project" value="UniProtKB-EC"/>
</dbReference>
<dbReference type="GO" id="GO:0033786">
    <property type="term" value="F:heptose-1-phosphate adenylyltransferase activity"/>
    <property type="evidence" value="ECO:0007669"/>
    <property type="project" value="TreeGrafter"/>
</dbReference>
<dbReference type="GO" id="GO:0016773">
    <property type="term" value="F:phosphotransferase activity, alcohol group as acceptor"/>
    <property type="evidence" value="ECO:0007669"/>
    <property type="project" value="InterPro"/>
</dbReference>
<dbReference type="GO" id="GO:0097171">
    <property type="term" value="P:ADP-L-glycero-beta-D-manno-heptose biosynthetic process"/>
    <property type="evidence" value="ECO:0007669"/>
    <property type="project" value="UniProtKB-UniPathway"/>
</dbReference>
<dbReference type="GO" id="GO:0009244">
    <property type="term" value="P:lipopolysaccharide core region biosynthetic process"/>
    <property type="evidence" value="ECO:0007669"/>
    <property type="project" value="UniProtKB-UniPathway"/>
</dbReference>
<dbReference type="CDD" id="cd01172">
    <property type="entry name" value="RfaE_like"/>
    <property type="match status" value="1"/>
</dbReference>
<dbReference type="FunFam" id="3.40.1190.20:FF:000002">
    <property type="entry name" value="Bifunctional protein HldE"/>
    <property type="match status" value="1"/>
</dbReference>
<dbReference type="Gene3D" id="3.40.1190.20">
    <property type="match status" value="1"/>
</dbReference>
<dbReference type="InterPro" id="IPR002173">
    <property type="entry name" value="Carboh/pur_kinase_PfkB_CS"/>
</dbReference>
<dbReference type="InterPro" id="IPR011611">
    <property type="entry name" value="PfkB_dom"/>
</dbReference>
<dbReference type="InterPro" id="IPR011913">
    <property type="entry name" value="RfaE_dom_I"/>
</dbReference>
<dbReference type="InterPro" id="IPR029056">
    <property type="entry name" value="Ribokinase-like"/>
</dbReference>
<dbReference type="NCBIfam" id="TIGR02198">
    <property type="entry name" value="rfaE_dom_I"/>
    <property type="match status" value="1"/>
</dbReference>
<dbReference type="PANTHER" id="PTHR46969">
    <property type="entry name" value="BIFUNCTIONAL PROTEIN HLDE"/>
    <property type="match status" value="1"/>
</dbReference>
<dbReference type="PANTHER" id="PTHR46969:SF1">
    <property type="entry name" value="BIFUNCTIONAL PROTEIN HLDE"/>
    <property type="match status" value="1"/>
</dbReference>
<dbReference type="Pfam" id="PF00294">
    <property type="entry name" value="PfkB"/>
    <property type="match status" value="1"/>
</dbReference>
<dbReference type="SUPFAM" id="SSF53613">
    <property type="entry name" value="Ribokinase-like"/>
    <property type="match status" value="1"/>
</dbReference>
<dbReference type="PROSITE" id="PS00583">
    <property type="entry name" value="PFKB_KINASES_1"/>
    <property type="match status" value="1"/>
</dbReference>
<reference key="1">
    <citation type="journal article" date="2003" name="Nat. Genet.">
        <title>Comparative analysis of the genome sequences of Bordetella pertussis, Bordetella parapertussis and Bordetella bronchiseptica.</title>
        <authorList>
            <person name="Parkhill J."/>
            <person name="Sebaihia M."/>
            <person name="Preston A."/>
            <person name="Murphy L.D."/>
            <person name="Thomson N.R."/>
            <person name="Harris D.E."/>
            <person name="Holden M.T.G."/>
            <person name="Churcher C.M."/>
            <person name="Bentley S.D."/>
            <person name="Mungall K.L."/>
            <person name="Cerdeno-Tarraga A.-M."/>
            <person name="Temple L."/>
            <person name="James K.D."/>
            <person name="Harris B."/>
            <person name="Quail M.A."/>
            <person name="Achtman M."/>
            <person name="Atkin R."/>
            <person name="Baker S."/>
            <person name="Basham D."/>
            <person name="Bason N."/>
            <person name="Cherevach I."/>
            <person name="Chillingworth T."/>
            <person name="Collins M."/>
            <person name="Cronin A."/>
            <person name="Davis P."/>
            <person name="Doggett J."/>
            <person name="Feltwell T."/>
            <person name="Goble A."/>
            <person name="Hamlin N."/>
            <person name="Hauser H."/>
            <person name="Holroyd S."/>
            <person name="Jagels K."/>
            <person name="Leather S."/>
            <person name="Moule S."/>
            <person name="Norberczak H."/>
            <person name="O'Neil S."/>
            <person name="Ormond D."/>
            <person name="Price C."/>
            <person name="Rabbinowitsch E."/>
            <person name="Rutter S."/>
            <person name="Sanders M."/>
            <person name="Saunders D."/>
            <person name="Seeger K."/>
            <person name="Sharp S."/>
            <person name="Simmonds M."/>
            <person name="Skelton J."/>
            <person name="Squares R."/>
            <person name="Squares S."/>
            <person name="Stevens K."/>
            <person name="Unwin L."/>
            <person name="Whitehead S."/>
            <person name="Barrell B.G."/>
            <person name="Maskell D.J."/>
        </authorList>
    </citation>
    <scope>NUCLEOTIDE SEQUENCE [LARGE SCALE GENOMIC DNA]</scope>
    <source>
        <strain>ATCC BAA-588 / NCTC 13252 / RB50</strain>
    </source>
</reference>
<reference key="2">
    <citation type="journal article" date="2010" name="Biochemistry">
        <title>Divergence of biochemical function in the HAD superfamily: D-glycero-D-manno-heptose-1,7-bisphosphate phosphatase (GmhB).</title>
        <authorList>
            <person name="Wang L."/>
            <person name="Huang H."/>
            <person name="Nguyen H.H."/>
            <person name="Allen K.N."/>
            <person name="Mariano P.S."/>
            <person name="Dunaway-Mariano D."/>
        </authorList>
    </citation>
    <scope>FUNCTION</scope>
    <scope>CATALYTIC ACTIVITY</scope>
    <scope>MASS SPECTROMETRY</scope>
    <scope>PATHWAY</scope>
</reference>
<organism>
    <name type="scientific">Bordetella bronchiseptica (strain ATCC BAA-588 / NCTC 13252 / RB50)</name>
    <name type="common">Alcaligenes bronchisepticus</name>
    <dbReference type="NCBI Taxonomy" id="257310"/>
    <lineage>
        <taxon>Bacteria</taxon>
        <taxon>Pseudomonadati</taxon>
        <taxon>Pseudomonadota</taxon>
        <taxon>Betaproteobacteria</taxon>
        <taxon>Burkholderiales</taxon>
        <taxon>Alcaligenaceae</taxon>
        <taxon>Bordetella</taxon>
    </lineage>
</organism>